<protein>
    <recommendedName>
        <fullName evidence="1">Large ribosomal subunit protein bL17</fullName>
    </recommendedName>
    <alternativeName>
        <fullName evidence="2">50S ribosomal protein L17</fullName>
    </alternativeName>
</protein>
<accession>A6TWF2</accession>
<proteinExistence type="inferred from homology"/>
<comment type="subunit">
    <text evidence="1">Part of the 50S ribosomal subunit. Contacts protein L32.</text>
</comment>
<comment type="similarity">
    <text evidence="1">Belongs to the bacterial ribosomal protein bL17 family.</text>
</comment>
<sequence>MPQNRKLGRDSAHRNLMLRNLVTSLFKSGRIQTTEPKAKETRRAAEKMITLAKRGDLHARRQALAYMTEETVVTNLFEEIAPKYQDRNGGYTRIMKLGPRQGDAAEVCILELV</sequence>
<gene>
    <name evidence="1" type="primary">rplQ</name>
    <name type="ordered locus">Amet_4448</name>
</gene>
<name>RL17_ALKMQ</name>
<keyword id="KW-1185">Reference proteome</keyword>
<keyword id="KW-0687">Ribonucleoprotein</keyword>
<keyword id="KW-0689">Ribosomal protein</keyword>
<dbReference type="EMBL" id="CP000724">
    <property type="protein sequence ID" value="ABR50520.1"/>
    <property type="molecule type" value="Genomic_DNA"/>
</dbReference>
<dbReference type="RefSeq" id="WP_012065412.1">
    <property type="nucleotide sequence ID" value="NC_009633.1"/>
</dbReference>
<dbReference type="SMR" id="A6TWF2"/>
<dbReference type="STRING" id="293826.Amet_4448"/>
<dbReference type="KEGG" id="amt:Amet_4448"/>
<dbReference type="eggNOG" id="COG0203">
    <property type="taxonomic scope" value="Bacteria"/>
</dbReference>
<dbReference type="HOGENOM" id="CLU_074407_2_2_9"/>
<dbReference type="OrthoDB" id="9809073at2"/>
<dbReference type="Proteomes" id="UP000001572">
    <property type="component" value="Chromosome"/>
</dbReference>
<dbReference type="GO" id="GO:0022625">
    <property type="term" value="C:cytosolic large ribosomal subunit"/>
    <property type="evidence" value="ECO:0007669"/>
    <property type="project" value="TreeGrafter"/>
</dbReference>
<dbReference type="GO" id="GO:0003735">
    <property type="term" value="F:structural constituent of ribosome"/>
    <property type="evidence" value="ECO:0007669"/>
    <property type="project" value="InterPro"/>
</dbReference>
<dbReference type="GO" id="GO:0006412">
    <property type="term" value="P:translation"/>
    <property type="evidence" value="ECO:0007669"/>
    <property type="project" value="UniProtKB-UniRule"/>
</dbReference>
<dbReference type="FunFam" id="3.90.1030.10:FF:000001">
    <property type="entry name" value="50S ribosomal protein L17"/>
    <property type="match status" value="1"/>
</dbReference>
<dbReference type="Gene3D" id="3.90.1030.10">
    <property type="entry name" value="Ribosomal protein L17"/>
    <property type="match status" value="1"/>
</dbReference>
<dbReference type="HAMAP" id="MF_01368">
    <property type="entry name" value="Ribosomal_bL17"/>
    <property type="match status" value="1"/>
</dbReference>
<dbReference type="InterPro" id="IPR000456">
    <property type="entry name" value="Ribosomal_bL17"/>
</dbReference>
<dbReference type="InterPro" id="IPR047859">
    <property type="entry name" value="Ribosomal_bL17_CS"/>
</dbReference>
<dbReference type="InterPro" id="IPR036373">
    <property type="entry name" value="Ribosomal_bL17_sf"/>
</dbReference>
<dbReference type="NCBIfam" id="TIGR00059">
    <property type="entry name" value="L17"/>
    <property type="match status" value="1"/>
</dbReference>
<dbReference type="PANTHER" id="PTHR14413:SF16">
    <property type="entry name" value="LARGE RIBOSOMAL SUBUNIT PROTEIN BL17M"/>
    <property type="match status" value="1"/>
</dbReference>
<dbReference type="PANTHER" id="PTHR14413">
    <property type="entry name" value="RIBOSOMAL PROTEIN L17"/>
    <property type="match status" value="1"/>
</dbReference>
<dbReference type="Pfam" id="PF01196">
    <property type="entry name" value="Ribosomal_L17"/>
    <property type="match status" value="1"/>
</dbReference>
<dbReference type="SUPFAM" id="SSF64263">
    <property type="entry name" value="Prokaryotic ribosomal protein L17"/>
    <property type="match status" value="1"/>
</dbReference>
<dbReference type="PROSITE" id="PS01167">
    <property type="entry name" value="RIBOSOMAL_L17"/>
    <property type="match status" value="1"/>
</dbReference>
<reference key="1">
    <citation type="journal article" date="2016" name="Genome Announc.">
        <title>Complete genome sequence of Alkaliphilus metalliredigens strain QYMF, an alkaliphilic and metal-reducing bacterium isolated from borax-contaminated leachate ponds.</title>
        <authorList>
            <person name="Hwang C."/>
            <person name="Copeland A."/>
            <person name="Lucas S."/>
            <person name="Lapidus A."/>
            <person name="Barry K."/>
            <person name="Detter J.C."/>
            <person name="Glavina Del Rio T."/>
            <person name="Hammon N."/>
            <person name="Israni S."/>
            <person name="Dalin E."/>
            <person name="Tice H."/>
            <person name="Pitluck S."/>
            <person name="Chertkov O."/>
            <person name="Brettin T."/>
            <person name="Bruce D."/>
            <person name="Han C."/>
            <person name="Schmutz J."/>
            <person name="Larimer F."/>
            <person name="Land M.L."/>
            <person name="Hauser L."/>
            <person name="Kyrpides N."/>
            <person name="Mikhailova N."/>
            <person name="Ye Q."/>
            <person name="Zhou J."/>
            <person name="Richardson P."/>
            <person name="Fields M.W."/>
        </authorList>
    </citation>
    <scope>NUCLEOTIDE SEQUENCE [LARGE SCALE GENOMIC DNA]</scope>
    <source>
        <strain>QYMF</strain>
    </source>
</reference>
<feature type="chain" id="PRO_1000068014" description="Large ribosomal subunit protein bL17">
    <location>
        <begin position="1"/>
        <end position="113"/>
    </location>
</feature>
<organism>
    <name type="scientific">Alkaliphilus metalliredigens (strain QYMF)</name>
    <dbReference type="NCBI Taxonomy" id="293826"/>
    <lineage>
        <taxon>Bacteria</taxon>
        <taxon>Bacillati</taxon>
        <taxon>Bacillota</taxon>
        <taxon>Clostridia</taxon>
        <taxon>Peptostreptococcales</taxon>
        <taxon>Natronincolaceae</taxon>
        <taxon>Alkaliphilus</taxon>
    </lineage>
</organism>
<evidence type="ECO:0000255" key="1">
    <source>
        <dbReference type="HAMAP-Rule" id="MF_01368"/>
    </source>
</evidence>
<evidence type="ECO:0000305" key="2"/>